<proteinExistence type="inferred from homology"/>
<evidence type="ECO:0000255" key="1">
    <source>
        <dbReference type="HAMAP-Rule" id="MF_01006"/>
    </source>
</evidence>
<keyword id="KW-0046">Antibiotic resistance</keyword>
<keyword id="KW-0997">Cell inner membrane</keyword>
<keyword id="KW-1003">Cell membrane</keyword>
<keyword id="KW-0133">Cell shape</keyword>
<keyword id="KW-0961">Cell wall biogenesis/degradation</keyword>
<keyword id="KW-0378">Hydrolase</keyword>
<keyword id="KW-0472">Membrane</keyword>
<keyword id="KW-0573">Peptidoglycan synthesis</keyword>
<keyword id="KW-0812">Transmembrane</keyword>
<keyword id="KW-1133">Transmembrane helix</keyword>
<sequence length="265" mass="28653">MDYINAALLGVIEGITEFLPISSTGHLIIAEQWLGHRSDMFNIVIQAGAILAVTIIYWRRLLDLVLGWREPENRDYAAKLIVAFLITAILGLVVKKLGFELPETATPIAWALIIGGIWMIFAEWAAARKAPHKEITWLVAILVGIAQIVAGVFPGTSRSGATIFVAMLAGTGNRAAATEFAFLVGIPTMYAASGYELLKTFKDGGAAGEDWTALAIAFIVSTIVAFIAVKWLLAYIRSNRFTLFAIYRIILGVLLLGMATSGLIA</sequence>
<reference key="1">
    <citation type="journal article" date="2010" name="Appl. Environ. Microbiol.">
        <title>Conserved symbiotic plasmid DNA sequences in the multireplicon pangenomic structure of Rhizobium etli.</title>
        <authorList>
            <person name="Gonzalez V."/>
            <person name="Acosta J.L."/>
            <person name="Santamaria R.I."/>
            <person name="Bustos P."/>
            <person name="Fernandez J.L."/>
            <person name="Hernandez Gonzalez I.L."/>
            <person name="Diaz R."/>
            <person name="Flores M."/>
            <person name="Palacios R."/>
            <person name="Mora J."/>
            <person name="Davila G."/>
        </authorList>
    </citation>
    <scope>NUCLEOTIDE SEQUENCE [LARGE SCALE GENOMIC DNA]</scope>
    <source>
        <strain>CIAT 652</strain>
    </source>
</reference>
<protein>
    <recommendedName>
        <fullName evidence="1">Undecaprenyl-diphosphatase</fullName>
        <ecNumber evidence="1">3.6.1.27</ecNumber>
    </recommendedName>
    <alternativeName>
        <fullName evidence="1">Bacitracin resistance protein</fullName>
    </alternativeName>
    <alternativeName>
        <fullName evidence="1">Undecaprenyl pyrophosphate phosphatase</fullName>
    </alternativeName>
</protein>
<feature type="chain" id="PRO_1000197395" description="Undecaprenyl-diphosphatase">
    <location>
        <begin position="1"/>
        <end position="265"/>
    </location>
</feature>
<feature type="transmembrane region" description="Helical" evidence="1">
    <location>
        <begin position="38"/>
        <end position="58"/>
    </location>
</feature>
<feature type="transmembrane region" description="Helical" evidence="1">
    <location>
        <begin position="80"/>
        <end position="100"/>
    </location>
</feature>
<feature type="transmembrane region" description="Helical" evidence="1">
    <location>
        <begin position="107"/>
        <end position="127"/>
    </location>
</feature>
<feature type="transmembrane region" description="Helical" evidence="1">
    <location>
        <begin position="135"/>
        <end position="155"/>
    </location>
</feature>
<feature type="transmembrane region" description="Helical" evidence="1">
    <location>
        <begin position="175"/>
        <end position="195"/>
    </location>
</feature>
<feature type="transmembrane region" description="Helical" evidence="1">
    <location>
        <begin position="213"/>
        <end position="233"/>
    </location>
</feature>
<feature type="transmembrane region" description="Helical" evidence="1">
    <location>
        <begin position="244"/>
        <end position="264"/>
    </location>
</feature>
<name>UPPP_RHIE6</name>
<accession>B3PYJ1</accession>
<dbReference type="EC" id="3.6.1.27" evidence="1"/>
<dbReference type="EMBL" id="CP001074">
    <property type="protein sequence ID" value="ACE89342.1"/>
    <property type="molecule type" value="Genomic_DNA"/>
</dbReference>
<dbReference type="SMR" id="B3PYJ1"/>
<dbReference type="KEGG" id="rec:RHECIAT_CH0000348"/>
<dbReference type="eggNOG" id="COG1968">
    <property type="taxonomic scope" value="Bacteria"/>
</dbReference>
<dbReference type="HOGENOM" id="CLU_060296_2_0_5"/>
<dbReference type="Proteomes" id="UP000008817">
    <property type="component" value="Chromosome"/>
</dbReference>
<dbReference type="GO" id="GO:0005886">
    <property type="term" value="C:plasma membrane"/>
    <property type="evidence" value="ECO:0007669"/>
    <property type="project" value="UniProtKB-SubCell"/>
</dbReference>
<dbReference type="GO" id="GO:0050380">
    <property type="term" value="F:undecaprenyl-diphosphatase activity"/>
    <property type="evidence" value="ECO:0007669"/>
    <property type="project" value="UniProtKB-UniRule"/>
</dbReference>
<dbReference type="GO" id="GO:0071555">
    <property type="term" value="P:cell wall organization"/>
    <property type="evidence" value="ECO:0007669"/>
    <property type="project" value="UniProtKB-KW"/>
</dbReference>
<dbReference type="GO" id="GO:0009252">
    <property type="term" value="P:peptidoglycan biosynthetic process"/>
    <property type="evidence" value="ECO:0007669"/>
    <property type="project" value="UniProtKB-KW"/>
</dbReference>
<dbReference type="GO" id="GO:0008360">
    <property type="term" value="P:regulation of cell shape"/>
    <property type="evidence" value="ECO:0007669"/>
    <property type="project" value="UniProtKB-KW"/>
</dbReference>
<dbReference type="GO" id="GO:0046677">
    <property type="term" value="P:response to antibiotic"/>
    <property type="evidence" value="ECO:0007669"/>
    <property type="project" value="UniProtKB-UniRule"/>
</dbReference>
<dbReference type="HAMAP" id="MF_01006">
    <property type="entry name" value="Undec_diphosphatase"/>
    <property type="match status" value="1"/>
</dbReference>
<dbReference type="InterPro" id="IPR003824">
    <property type="entry name" value="UppP"/>
</dbReference>
<dbReference type="NCBIfam" id="NF001390">
    <property type="entry name" value="PRK00281.1-4"/>
    <property type="match status" value="1"/>
</dbReference>
<dbReference type="PANTHER" id="PTHR30622">
    <property type="entry name" value="UNDECAPRENYL-DIPHOSPHATASE"/>
    <property type="match status" value="1"/>
</dbReference>
<dbReference type="PANTHER" id="PTHR30622:SF3">
    <property type="entry name" value="UNDECAPRENYL-DIPHOSPHATASE"/>
    <property type="match status" value="1"/>
</dbReference>
<dbReference type="Pfam" id="PF02673">
    <property type="entry name" value="BacA"/>
    <property type="match status" value="1"/>
</dbReference>
<gene>
    <name evidence="1" type="primary">uppP</name>
    <name type="ordered locus">RHECIAT_CH0000348</name>
</gene>
<organism>
    <name type="scientific">Rhizobium etli (strain CIAT 652)</name>
    <dbReference type="NCBI Taxonomy" id="491916"/>
    <lineage>
        <taxon>Bacteria</taxon>
        <taxon>Pseudomonadati</taxon>
        <taxon>Pseudomonadota</taxon>
        <taxon>Alphaproteobacteria</taxon>
        <taxon>Hyphomicrobiales</taxon>
        <taxon>Rhizobiaceae</taxon>
        <taxon>Rhizobium/Agrobacterium group</taxon>
        <taxon>Rhizobium</taxon>
    </lineage>
</organism>
<comment type="function">
    <text evidence="1">Catalyzes the dephosphorylation of undecaprenyl diphosphate (UPP). Confers resistance to bacitracin.</text>
</comment>
<comment type="catalytic activity">
    <reaction evidence="1">
        <text>di-trans,octa-cis-undecaprenyl diphosphate + H2O = di-trans,octa-cis-undecaprenyl phosphate + phosphate + H(+)</text>
        <dbReference type="Rhea" id="RHEA:28094"/>
        <dbReference type="ChEBI" id="CHEBI:15377"/>
        <dbReference type="ChEBI" id="CHEBI:15378"/>
        <dbReference type="ChEBI" id="CHEBI:43474"/>
        <dbReference type="ChEBI" id="CHEBI:58405"/>
        <dbReference type="ChEBI" id="CHEBI:60392"/>
        <dbReference type="EC" id="3.6.1.27"/>
    </reaction>
</comment>
<comment type="subcellular location">
    <subcellularLocation>
        <location evidence="1">Cell inner membrane</location>
        <topology evidence="1">Multi-pass membrane protein</topology>
    </subcellularLocation>
</comment>
<comment type="miscellaneous">
    <text>Bacitracin is thought to be involved in the inhibition of peptidoglycan synthesis by sequestering undecaprenyl diphosphate, thereby reducing the pool of lipid carrier available.</text>
</comment>
<comment type="similarity">
    <text evidence="1">Belongs to the UppP family.</text>
</comment>